<dbReference type="EMBL" id="CP000029">
    <property type="protein sequence ID" value="AAW53566.1"/>
    <property type="molecule type" value="Genomic_DNA"/>
</dbReference>
<dbReference type="RefSeq" id="WP_002438679.1">
    <property type="nucleotide sequence ID" value="NC_002976.3"/>
</dbReference>
<dbReference type="SMR" id="Q5HRL7"/>
<dbReference type="STRING" id="176279.SERP0176"/>
<dbReference type="GeneID" id="50019536"/>
<dbReference type="KEGG" id="ser:SERP0176"/>
<dbReference type="eggNOG" id="COG0690">
    <property type="taxonomic scope" value="Bacteria"/>
</dbReference>
<dbReference type="HOGENOM" id="CLU_113663_8_2_9"/>
<dbReference type="Proteomes" id="UP000000531">
    <property type="component" value="Chromosome"/>
</dbReference>
<dbReference type="GO" id="GO:0005886">
    <property type="term" value="C:plasma membrane"/>
    <property type="evidence" value="ECO:0007669"/>
    <property type="project" value="UniProtKB-SubCell"/>
</dbReference>
<dbReference type="GO" id="GO:0008320">
    <property type="term" value="F:protein transmembrane transporter activity"/>
    <property type="evidence" value="ECO:0007669"/>
    <property type="project" value="UniProtKB-UniRule"/>
</dbReference>
<dbReference type="GO" id="GO:0065002">
    <property type="term" value="P:intracellular protein transmembrane transport"/>
    <property type="evidence" value="ECO:0007669"/>
    <property type="project" value="UniProtKB-UniRule"/>
</dbReference>
<dbReference type="GO" id="GO:0009306">
    <property type="term" value="P:protein secretion"/>
    <property type="evidence" value="ECO:0007669"/>
    <property type="project" value="UniProtKB-UniRule"/>
</dbReference>
<dbReference type="GO" id="GO:0006605">
    <property type="term" value="P:protein targeting"/>
    <property type="evidence" value="ECO:0007669"/>
    <property type="project" value="UniProtKB-UniRule"/>
</dbReference>
<dbReference type="GO" id="GO:0043952">
    <property type="term" value="P:protein transport by the Sec complex"/>
    <property type="evidence" value="ECO:0007669"/>
    <property type="project" value="UniProtKB-UniRule"/>
</dbReference>
<dbReference type="Gene3D" id="1.20.5.1030">
    <property type="entry name" value="Preprotein translocase secy subunit"/>
    <property type="match status" value="1"/>
</dbReference>
<dbReference type="HAMAP" id="MF_00422">
    <property type="entry name" value="SecE"/>
    <property type="match status" value="1"/>
</dbReference>
<dbReference type="InterPro" id="IPR005807">
    <property type="entry name" value="SecE_bac"/>
</dbReference>
<dbReference type="InterPro" id="IPR038379">
    <property type="entry name" value="SecE_sf"/>
</dbReference>
<dbReference type="InterPro" id="IPR001901">
    <property type="entry name" value="Translocase_SecE/Sec61-g"/>
</dbReference>
<dbReference type="NCBIfam" id="TIGR00964">
    <property type="entry name" value="secE_bact"/>
    <property type="match status" value="1"/>
</dbReference>
<dbReference type="PANTHER" id="PTHR33910">
    <property type="entry name" value="PROTEIN TRANSLOCASE SUBUNIT SECE"/>
    <property type="match status" value="1"/>
</dbReference>
<dbReference type="PANTHER" id="PTHR33910:SF1">
    <property type="entry name" value="PROTEIN TRANSLOCASE SUBUNIT SECE"/>
    <property type="match status" value="1"/>
</dbReference>
<dbReference type="Pfam" id="PF00584">
    <property type="entry name" value="SecE"/>
    <property type="match status" value="1"/>
</dbReference>
<dbReference type="PROSITE" id="PS01067">
    <property type="entry name" value="SECE_SEC61G"/>
    <property type="match status" value="1"/>
</dbReference>
<reference key="1">
    <citation type="journal article" date="2005" name="J. Bacteriol.">
        <title>Insights on evolution of virulence and resistance from the complete genome analysis of an early methicillin-resistant Staphylococcus aureus strain and a biofilm-producing methicillin-resistant Staphylococcus epidermidis strain.</title>
        <authorList>
            <person name="Gill S.R."/>
            <person name="Fouts D.E."/>
            <person name="Archer G.L."/>
            <person name="Mongodin E.F."/>
            <person name="DeBoy R.T."/>
            <person name="Ravel J."/>
            <person name="Paulsen I.T."/>
            <person name="Kolonay J.F."/>
            <person name="Brinkac L.M."/>
            <person name="Beanan M.J."/>
            <person name="Dodson R.J."/>
            <person name="Daugherty S.C."/>
            <person name="Madupu R."/>
            <person name="Angiuoli S.V."/>
            <person name="Durkin A.S."/>
            <person name="Haft D.H."/>
            <person name="Vamathevan J.J."/>
            <person name="Khouri H."/>
            <person name="Utterback T.R."/>
            <person name="Lee C."/>
            <person name="Dimitrov G."/>
            <person name="Jiang L."/>
            <person name="Qin H."/>
            <person name="Weidman J."/>
            <person name="Tran K."/>
            <person name="Kang K.H."/>
            <person name="Hance I.R."/>
            <person name="Nelson K.E."/>
            <person name="Fraser C.M."/>
        </authorList>
    </citation>
    <scope>NUCLEOTIDE SEQUENCE [LARGE SCALE GENOMIC DNA]</scope>
    <source>
        <strain>ATCC 35984 / DSM 28319 / BCRC 17069 / CCUG 31568 / BM 3577 / RP62A</strain>
    </source>
</reference>
<name>SECE_STAEQ</name>
<sequence length="60" mass="6973">MAKKESFFKGVKSEMEKTSWPTKEELFKYTIIVVSTVIFFLVFFYALDIGINALKQLFLG</sequence>
<keyword id="KW-1003">Cell membrane</keyword>
<keyword id="KW-0472">Membrane</keyword>
<keyword id="KW-0653">Protein transport</keyword>
<keyword id="KW-1185">Reference proteome</keyword>
<keyword id="KW-0811">Translocation</keyword>
<keyword id="KW-0812">Transmembrane</keyword>
<keyword id="KW-1133">Transmembrane helix</keyword>
<keyword id="KW-0813">Transport</keyword>
<gene>
    <name evidence="1" type="primary">secE</name>
    <name type="ordered locus">SERP0176</name>
</gene>
<organism>
    <name type="scientific">Staphylococcus epidermidis (strain ATCC 35984 / DSM 28319 / BCRC 17069 / CCUG 31568 / BM 3577 / RP62A)</name>
    <dbReference type="NCBI Taxonomy" id="176279"/>
    <lineage>
        <taxon>Bacteria</taxon>
        <taxon>Bacillati</taxon>
        <taxon>Bacillota</taxon>
        <taxon>Bacilli</taxon>
        <taxon>Bacillales</taxon>
        <taxon>Staphylococcaceae</taxon>
        <taxon>Staphylococcus</taxon>
    </lineage>
</organism>
<evidence type="ECO:0000255" key="1">
    <source>
        <dbReference type="HAMAP-Rule" id="MF_00422"/>
    </source>
</evidence>
<accession>Q5HRL7</accession>
<feature type="chain" id="PRO_0000104182" description="Protein translocase subunit SecE">
    <location>
        <begin position="1"/>
        <end position="60"/>
    </location>
</feature>
<feature type="transmembrane region" description="Helical" evidence="1">
    <location>
        <begin position="31"/>
        <end position="51"/>
    </location>
</feature>
<protein>
    <recommendedName>
        <fullName evidence="1">Protein translocase subunit SecE</fullName>
    </recommendedName>
</protein>
<comment type="function">
    <text evidence="1">Essential subunit of the Sec protein translocation channel SecYEG. Clamps together the 2 halves of SecY. May contact the channel plug during translocation.</text>
</comment>
<comment type="subunit">
    <text evidence="1">Component of the Sec protein translocase complex. Heterotrimer consisting of SecY, SecE and SecG subunits. The heterotrimers can form oligomers, although 1 heterotrimer is thought to be able to translocate proteins. Interacts with the ribosome. Interacts with SecDF, and other proteins may be involved. Interacts with SecA.</text>
</comment>
<comment type="subcellular location">
    <subcellularLocation>
        <location evidence="1">Cell membrane</location>
        <topology evidence="1">Single-pass membrane protein</topology>
    </subcellularLocation>
</comment>
<comment type="similarity">
    <text evidence="1">Belongs to the SecE/SEC61-gamma family.</text>
</comment>
<proteinExistence type="inferred from homology"/>